<gene>
    <name type="primary">ptps-1</name>
    <name type="ORF">B0041.6</name>
</gene>
<proteinExistence type="evidence at protein level"/>
<comment type="function">
    <text evidence="1">Involved in the biosynthesis of tetrahydrobiopterin, an essential cofactor of aromatic amino acid hydroxylases. Catalyzes the transformation of 7,8-dihydroneopterin triphosphate into 6-pyruvoyl tetrahydropterin (By similarity).</text>
</comment>
<comment type="catalytic activity">
    <reaction>
        <text>7,8-dihydroneopterin 3'-triphosphate = 6-pyruvoyl-5,6,7,8-tetrahydropterin + triphosphate + H(+)</text>
        <dbReference type="Rhea" id="RHEA:22048"/>
        <dbReference type="ChEBI" id="CHEBI:15378"/>
        <dbReference type="ChEBI" id="CHEBI:18036"/>
        <dbReference type="ChEBI" id="CHEBI:58462"/>
        <dbReference type="ChEBI" id="CHEBI:136564"/>
        <dbReference type="EC" id="4.2.3.12"/>
    </reaction>
</comment>
<comment type="cofactor">
    <cofactor evidence="1">
        <name>Zn(2+)</name>
        <dbReference type="ChEBI" id="CHEBI:29105"/>
    </cofactor>
    <text evidence="1">Binds 1 zinc ion per subunit.</text>
</comment>
<comment type="pathway">
    <text>Cofactor biosynthesis; tetrahydrobiopterin biosynthesis; tetrahydrobiopterin from 7,8-dihydroneopterin triphosphate: step 1/3.</text>
</comment>
<comment type="subunit">
    <text evidence="1">Homohexamer formed of two homotrimers in a head to head fashion.</text>
</comment>
<comment type="interaction">
    <interactant intactId="EBI-312091">
        <id>O02058</id>
    </interactant>
    <interactant intactId="EBI-312091">
        <id>O02058</id>
        <label>ptps-1</label>
    </interactant>
    <organismsDiffer>false</organismsDiffer>
    <experiments>4</experiments>
</comment>
<comment type="alternative products">
    <event type="alternative splicing"/>
    <isoform>
        <id>O02058-1</id>
        <name>a</name>
        <sequence type="displayed"/>
    </isoform>
    <isoform>
        <id>O02058-2</id>
        <name>b</name>
        <sequence type="described" ref="VSP_019291"/>
    </isoform>
</comment>
<comment type="miscellaneous">
    <text>The active site is at the interface between 2 subunits. The proton acceptor Cys is on one subunit, and the charge relay system is on the other subunit.</text>
</comment>
<comment type="similarity">
    <text evidence="3">Belongs to the PTPS family.</text>
</comment>
<protein>
    <recommendedName>
        <fullName>Putative 6-pyruvoyl tetrahydrobiopterin synthase</fullName>
        <shortName>PTP synthase</shortName>
        <shortName>PTPS</shortName>
        <ecNumber>4.2.3.12</ecNumber>
    </recommendedName>
</protein>
<evidence type="ECO:0000250" key="1"/>
<evidence type="ECO:0000255" key="2">
    <source>
        <dbReference type="PROSITE-ProRule" id="PRU10123"/>
    </source>
</evidence>
<evidence type="ECO:0000305" key="3"/>
<evidence type="ECO:0007829" key="4">
    <source>
        <dbReference type="PDB" id="2G64"/>
    </source>
</evidence>
<dbReference type="EC" id="4.2.3.12"/>
<dbReference type="EMBL" id="FO080106">
    <property type="protein sequence ID" value="CCD61251.1"/>
    <property type="molecule type" value="Genomic_DNA"/>
</dbReference>
<dbReference type="EMBL" id="FO080106">
    <property type="protein sequence ID" value="CCD61252.1"/>
    <property type="molecule type" value="Genomic_DNA"/>
</dbReference>
<dbReference type="PIR" id="T34033">
    <property type="entry name" value="T34033"/>
</dbReference>
<dbReference type="RefSeq" id="NP_001040626.1">
    <molecule id="O02058-1"/>
    <property type="nucleotide sequence ID" value="NM_001047161.2"/>
</dbReference>
<dbReference type="RefSeq" id="NP_001040627.1">
    <molecule id="O02058-2"/>
    <property type="nucleotide sequence ID" value="NM_001047162.4"/>
</dbReference>
<dbReference type="PDB" id="2G64">
    <property type="method" value="X-ray"/>
    <property type="resolution" value="1.80 A"/>
    <property type="chains" value="A=1-140"/>
</dbReference>
<dbReference type="PDBsum" id="2G64"/>
<dbReference type="SMR" id="O02058"/>
<dbReference type="BioGRID" id="46692">
    <property type="interactions" value="3"/>
</dbReference>
<dbReference type="FunCoup" id="O02058">
    <property type="interactions" value="2287"/>
</dbReference>
<dbReference type="IntAct" id="O02058">
    <property type="interactions" value="1"/>
</dbReference>
<dbReference type="STRING" id="6239.B0041.6a.1"/>
<dbReference type="PaxDb" id="6239-B0041.6a"/>
<dbReference type="PeptideAtlas" id="O02058"/>
<dbReference type="EnsemblMetazoa" id="B0041.6a.1">
    <molecule id="O02058-1"/>
    <property type="protein sequence ID" value="B0041.6a.1"/>
    <property type="gene ID" value="WBGene00015010"/>
</dbReference>
<dbReference type="EnsemblMetazoa" id="B0041.6b.1">
    <molecule id="O02058-2"/>
    <property type="protein sequence ID" value="B0041.6b.1"/>
    <property type="gene ID" value="WBGene00015010"/>
</dbReference>
<dbReference type="GeneID" id="181823"/>
<dbReference type="KEGG" id="cel:CELE_B0041.6"/>
<dbReference type="UCSC" id="B0041.6b">
    <molecule id="O02058-1"/>
    <property type="organism name" value="c. elegans"/>
</dbReference>
<dbReference type="AGR" id="WB:WBGene00015010"/>
<dbReference type="CTD" id="181823"/>
<dbReference type="WormBase" id="B0041.6a">
    <molecule id="O02058-1"/>
    <property type="protein sequence ID" value="CE34237"/>
    <property type="gene ID" value="WBGene00015010"/>
    <property type="gene designation" value="ptps-1"/>
</dbReference>
<dbReference type="WormBase" id="B0041.6b">
    <molecule id="O02058-2"/>
    <property type="protein sequence ID" value="CE39541"/>
    <property type="gene ID" value="WBGene00015010"/>
    <property type="gene designation" value="ptps-1"/>
</dbReference>
<dbReference type="eggNOG" id="KOG4105">
    <property type="taxonomic scope" value="Eukaryota"/>
</dbReference>
<dbReference type="GeneTree" id="ENSGT00390000002752"/>
<dbReference type="InParanoid" id="O02058"/>
<dbReference type="OMA" id="HFNAAHK"/>
<dbReference type="OrthoDB" id="14045at2759"/>
<dbReference type="PhylomeDB" id="O02058"/>
<dbReference type="Reactome" id="R-CEL-1474151">
    <property type="pathway name" value="Tetrahydrobiopterin (BH4) synthesis, recycling, salvage and regulation"/>
</dbReference>
<dbReference type="UniPathway" id="UPA00849">
    <property type="reaction ID" value="UER00819"/>
</dbReference>
<dbReference type="EvolutionaryTrace" id="O02058"/>
<dbReference type="PRO" id="PR:O02058"/>
<dbReference type="Proteomes" id="UP000001940">
    <property type="component" value="Chromosome I"/>
</dbReference>
<dbReference type="Bgee" id="WBGene00015010">
    <property type="expression patterns" value="Expressed in larva and 4 other cell types or tissues"/>
</dbReference>
<dbReference type="GO" id="GO:0005739">
    <property type="term" value="C:mitochondrion"/>
    <property type="evidence" value="ECO:0000318"/>
    <property type="project" value="GO_Central"/>
</dbReference>
<dbReference type="GO" id="GO:0003874">
    <property type="term" value="F:6-pyruvoyltetrahydropterin synthase activity"/>
    <property type="evidence" value="ECO:0000315"/>
    <property type="project" value="WormBase"/>
</dbReference>
<dbReference type="GO" id="GO:0042802">
    <property type="term" value="F:identical protein binding"/>
    <property type="evidence" value="ECO:0000353"/>
    <property type="project" value="IntAct"/>
</dbReference>
<dbReference type="GO" id="GO:0046872">
    <property type="term" value="F:metal ion binding"/>
    <property type="evidence" value="ECO:0007669"/>
    <property type="project" value="UniProtKB-KW"/>
</dbReference>
<dbReference type="GO" id="GO:0006729">
    <property type="term" value="P:tetrahydrobiopterin biosynthetic process"/>
    <property type="evidence" value="ECO:0000315"/>
    <property type="project" value="WormBase"/>
</dbReference>
<dbReference type="FunFam" id="3.30.479.10:FF:000003">
    <property type="entry name" value="6-pyruvoyl tetrahydrobiopterin synthase"/>
    <property type="match status" value="1"/>
</dbReference>
<dbReference type="Gene3D" id="3.30.479.10">
    <property type="entry name" value="6-pyruvoyl tetrahydropterin synthase/QueD"/>
    <property type="match status" value="1"/>
</dbReference>
<dbReference type="InterPro" id="IPR007115">
    <property type="entry name" value="6-PTP_synth/QueD"/>
</dbReference>
<dbReference type="InterPro" id="IPR038418">
    <property type="entry name" value="6-PTP_synth/QueD_sf"/>
</dbReference>
<dbReference type="InterPro" id="IPR022470">
    <property type="entry name" value="PTPS_Cys_AS"/>
</dbReference>
<dbReference type="NCBIfam" id="TIGR00039">
    <property type="entry name" value="6PTHBS"/>
    <property type="match status" value="1"/>
</dbReference>
<dbReference type="PANTHER" id="PTHR12589:SF7">
    <property type="entry name" value="6-PYRUVOYL TETRAHYDROBIOPTERIN SYNTHASE"/>
    <property type="match status" value="1"/>
</dbReference>
<dbReference type="PANTHER" id="PTHR12589">
    <property type="entry name" value="PYRUVOYL TETRAHYDROBIOPTERIN SYNTHASE"/>
    <property type="match status" value="1"/>
</dbReference>
<dbReference type="Pfam" id="PF01242">
    <property type="entry name" value="PTPS"/>
    <property type="match status" value="1"/>
</dbReference>
<dbReference type="SUPFAM" id="SSF55620">
    <property type="entry name" value="Tetrahydrobiopterin biosynthesis enzymes-like"/>
    <property type="match status" value="1"/>
</dbReference>
<dbReference type="PROSITE" id="PS00987">
    <property type="entry name" value="PTPS_1"/>
    <property type="match status" value="1"/>
</dbReference>
<name>PTPS_CAEEL</name>
<reference key="1">
    <citation type="journal article" date="1998" name="Science">
        <title>Genome sequence of the nematode C. elegans: a platform for investigating biology.</title>
        <authorList>
            <consortium name="The C. elegans sequencing consortium"/>
        </authorList>
    </citation>
    <scope>NUCLEOTIDE SEQUENCE [LARGE SCALE GENOMIC DNA]</scope>
    <scope>ALTERNATIVE SPLICING</scope>
    <source>
        <strain>Bristol N2</strain>
    </source>
</reference>
<sequence length="140" mass="16046">MFRMPIVTMERVDSFSAAHRLHSEKLSDAENKETFGKCNNSNGHGHNYVWKVKLRGEVDPTSGMVYDLAKLKKEMSLVLDTVDHRNLDKDVEFFKTTVSTSENVAIYMFEKLKSVMSNPSVLYKVTIEETPKNIFTYKGC</sequence>
<keyword id="KW-0002">3D-structure</keyword>
<keyword id="KW-0025">Alternative splicing</keyword>
<keyword id="KW-0456">Lyase</keyword>
<keyword id="KW-0479">Metal-binding</keyword>
<keyword id="KW-1185">Reference proteome</keyword>
<keyword id="KW-0783">Tetrahydrobiopterin biosynthesis</keyword>
<keyword id="KW-0862">Zinc</keyword>
<accession>O02058</accession>
<accession>Q2MGF4</accession>
<feature type="chain" id="PRO_0000057919" description="Putative 6-pyruvoyl tetrahydrobiopterin synthase">
    <location>
        <begin position="1"/>
        <end position="140"/>
    </location>
</feature>
<feature type="active site" description="Proton acceptor" evidence="2">
    <location>
        <position position="38"/>
    </location>
</feature>
<feature type="active site" description="Charge relay system" evidence="1">
    <location>
        <position position="84"/>
    </location>
</feature>
<feature type="active site" description="Charge relay system" evidence="1">
    <location>
        <position position="129"/>
    </location>
</feature>
<feature type="binding site" evidence="2">
    <location>
        <position position="19"/>
    </location>
    <ligand>
        <name>Zn(2+)</name>
        <dbReference type="ChEBI" id="CHEBI:29105"/>
    </ligand>
</feature>
<feature type="binding site" evidence="2">
    <location>
        <position position="44"/>
    </location>
    <ligand>
        <name>Zn(2+)</name>
        <dbReference type="ChEBI" id="CHEBI:29105"/>
    </ligand>
</feature>
<feature type="binding site" evidence="2">
    <location>
        <position position="46"/>
    </location>
    <ligand>
        <name>Zn(2+)</name>
        <dbReference type="ChEBI" id="CHEBI:29105"/>
    </ligand>
</feature>
<feature type="splice variant" id="VSP_019291" description="In isoform b." evidence="3">
    <location>
        <begin position="1"/>
        <end position="3"/>
    </location>
</feature>
<feature type="strand" evidence="4">
    <location>
        <begin position="6"/>
        <end position="19"/>
    </location>
</feature>
<feature type="helix" evidence="4">
    <location>
        <begin position="28"/>
        <end position="35"/>
    </location>
</feature>
<feature type="helix" evidence="4">
    <location>
        <begin position="36"/>
        <end position="39"/>
    </location>
</feature>
<feature type="strand" evidence="4">
    <location>
        <begin position="44"/>
        <end position="57"/>
    </location>
</feature>
<feature type="turn" evidence="4">
    <location>
        <begin position="60"/>
        <end position="62"/>
    </location>
</feature>
<feature type="helix" evidence="4">
    <location>
        <begin position="68"/>
        <end position="80"/>
    </location>
</feature>
<feature type="turn" evidence="4">
    <location>
        <begin position="81"/>
        <end position="84"/>
    </location>
</feature>
<feature type="helix" evidence="4">
    <location>
        <begin position="87"/>
        <end position="90"/>
    </location>
</feature>
<feature type="helix" evidence="4">
    <location>
        <begin position="92"/>
        <end position="95"/>
    </location>
</feature>
<feature type="helix" evidence="4">
    <location>
        <begin position="101"/>
        <end position="115"/>
    </location>
</feature>
<feature type="helix" evidence="4">
    <location>
        <begin position="119"/>
        <end position="121"/>
    </location>
</feature>
<feature type="strand" evidence="4">
    <location>
        <begin position="122"/>
        <end position="130"/>
    </location>
</feature>
<feature type="strand" evidence="4">
    <location>
        <begin position="133"/>
        <end position="137"/>
    </location>
</feature>
<organism>
    <name type="scientific">Caenorhabditis elegans</name>
    <dbReference type="NCBI Taxonomy" id="6239"/>
    <lineage>
        <taxon>Eukaryota</taxon>
        <taxon>Metazoa</taxon>
        <taxon>Ecdysozoa</taxon>
        <taxon>Nematoda</taxon>
        <taxon>Chromadorea</taxon>
        <taxon>Rhabditida</taxon>
        <taxon>Rhabditina</taxon>
        <taxon>Rhabditomorpha</taxon>
        <taxon>Rhabditoidea</taxon>
        <taxon>Rhabditidae</taxon>
        <taxon>Peloderinae</taxon>
        <taxon>Caenorhabditis</taxon>
    </lineage>
</organism>